<accession>Q9RLV9</accession>
<feature type="signal peptide" evidence="1">
    <location>
        <begin position="1"/>
        <end position="28"/>
    </location>
</feature>
<feature type="chain" id="PRO_0000046031" description="Sphingomyelinase C">
    <location>
        <begin position="29"/>
        <end position="335"/>
    </location>
</feature>
<feature type="strand" evidence="4">
    <location>
        <begin position="46"/>
        <end position="54"/>
    </location>
</feature>
<feature type="turn" evidence="4">
    <location>
        <begin position="57"/>
        <end position="59"/>
    </location>
</feature>
<feature type="helix" evidence="4">
    <location>
        <begin position="65"/>
        <end position="73"/>
    </location>
</feature>
<feature type="helix" evidence="4">
    <location>
        <begin position="76"/>
        <end position="78"/>
    </location>
</feature>
<feature type="strand" evidence="4">
    <location>
        <begin position="82"/>
        <end position="89"/>
    </location>
</feature>
<feature type="helix" evidence="4">
    <location>
        <begin position="92"/>
        <end position="101"/>
    </location>
</feature>
<feature type="turn" evidence="4">
    <location>
        <begin position="102"/>
        <end position="105"/>
    </location>
</feature>
<feature type="strand" evidence="4">
    <location>
        <begin position="121"/>
        <end position="124"/>
    </location>
</feature>
<feature type="strand" evidence="4">
    <location>
        <begin position="138"/>
        <end position="143"/>
    </location>
</feature>
<feature type="strand" evidence="4">
    <location>
        <begin position="145"/>
        <end position="152"/>
    </location>
</feature>
<feature type="helix" evidence="4">
    <location>
        <begin position="158"/>
        <end position="162"/>
    </location>
</feature>
<feature type="strand" evidence="4">
    <location>
        <begin position="166"/>
        <end position="174"/>
    </location>
</feature>
<feature type="strand" evidence="4">
    <location>
        <begin position="177"/>
        <end position="185"/>
    </location>
</feature>
<feature type="helix" evidence="4">
    <location>
        <begin position="195"/>
        <end position="216"/>
    </location>
</feature>
<feature type="strand" evidence="4">
    <location>
        <begin position="222"/>
        <end position="229"/>
    </location>
</feature>
<feature type="helix" evidence="4">
    <location>
        <begin position="237"/>
        <end position="246"/>
    </location>
</feature>
<feature type="turn" evidence="4">
    <location>
        <begin position="263"/>
        <end position="265"/>
    </location>
</feature>
<feature type="helix" evidence="4">
    <location>
        <begin position="267"/>
        <end position="272"/>
    </location>
</feature>
<feature type="strand" evidence="4">
    <location>
        <begin position="282"/>
        <end position="287"/>
    </location>
</feature>
<feature type="strand" evidence="4">
    <location>
        <begin position="296"/>
        <end position="300"/>
    </location>
</feature>
<feature type="strand" evidence="4">
    <location>
        <begin position="308"/>
        <end position="312"/>
    </location>
</feature>
<feature type="strand" evidence="4">
    <location>
        <begin position="315"/>
        <end position="319"/>
    </location>
</feature>
<feature type="strand" evidence="4">
    <location>
        <begin position="322"/>
        <end position="325"/>
    </location>
</feature>
<feature type="strand" evidence="4">
    <location>
        <begin position="328"/>
        <end position="332"/>
    </location>
</feature>
<dbReference type="EC" id="3.1.4.12"/>
<dbReference type="EMBL" id="Y09477">
    <property type="protein sequence ID" value="CAA70683.2"/>
    <property type="molecule type" value="Genomic_DNA"/>
</dbReference>
<dbReference type="PDB" id="1ZWX">
    <property type="method" value="X-ray"/>
    <property type="resolution" value="1.90 A"/>
    <property type="chains" value="A=36-335"/>
</dbReference>
<dbReference type="PDBsum" id="1ZWX"/>
<dbReference type="SMR" id="Q9RLV9"/>
<dbReference type="EvolutionaryTrace" id="Q9RLV9"/>
<dbReference type="GO" id="GO:0005576">
    <property type="term" value="C:extracellular region"/>
    <property type="evidence" value="ECO:0007669"/>
    <property type="project" value="UniProtKB-SubCell"/>
</dbReference>
<dbReference type="GO" id="GO:0004767">
    <property type="term" value="F:sphingomyelin phosphodiesterase activity"/>
    <property type="evidence" value="ECO:0007669"/>
    <property type="project" value="UniProtKB-EC"/>
</dbReference>
<dbReference type="GO" id="GO:0031640">
    <property type="term" value="P:killing of cells of another organism"/>
    <property type="evidence" value="ECO:0007669"/>
    <property type="project" value="UniProtKB-KW"/>
</dbReference>
<dbReference type="CDD" id="cd09078">
    <property type="entry name" value="nSMase"/>
    <property type="match status" value="1"/>
</dbReference>
<dbReference type="Gene3D" id="3.60.10.10">
    <property type="entry name" value="Endonuclease/exonuclease/phosphatase"/>
    <property type="match status" value="1"/>
</dbReference>
<dbReference type="InterPro" id="IPR036691">
    <property type="entry name" value="Endo/exonu/phosph_ase_sf"/>
</dbReference>
<dbReference type="InterPro" id="IPR005135">
    <property type="entry name" value="Endo/exonuclease/phosphatase"/>
</dbReference>
<dbReference type="InterPro" id="IPR038772">
    <property type="entry name" value="Sph/SMPD2-like"/>
</dbReference>
<dbReference type="InterPro" id="IPR017766">
    <property type="entry name" value="Sphingomyelinase/PLipase_C"/>
</dbReference>
<dbReference type="NCBIfam" id="TIGR03395">
    <property type="entry name" value="sphingomy"/>
    <property type="match status" value="1"/>
</dbReference>
<dbReference type="PANTHER" id="PTHR16320:SF23">
    <property type="entry name" value="SPHINGOMYELINASE C 1"/>
    <property type="match status" value="1"/>
</dbReference>
<dbReference type="PANTHER" id="PTHR16320">
    <property type="entry name" value="SPHINGOMYELINASE FAMILY MEMBER"/>
    <property type="match status" value="1"/>
</dbReference>
<dbReference type="Pfam" id="PF03372">
    <property type="entry name" value="Exo_endo_phos"/>
    <property type="match status" value="1"/>
</dbReference>
<dbReference type="SUPFAM" id="SSF56219">
    <property type="entry name" value="DNase I-like"/>
    <property type="match status" value="1"/>
</dbReference>
<evidence type="ECO:0000255" key="1"/>
<evidence type="ECO:0000269" key="2">
    <source>
    </source>
</evidence>
<evidence type="ECO:0000305" key="3"/>
<evidence type="ECO:0007829" key="4">
    <source>
        <dbReference type="PDB" id="1ZWX"/>
    </source>
</evidence>
<keyword id="KW-0002">3D-structure</keyword>
<keyword id="KW-0204">Cytolysis</keyword>
<keyword id="KW-0354">Hemolysis</keyword>
<keyword id="KW-0378">Hydrolase</keyword>
<keyword id="KW-0964">Secreted</keyword>
<keyword id="KW-0732">Signal</keyword>
<keyword id="KW-0843">Virulence</keyword>
<reference key="1">
    <citation type="journal article" date="1999" name="Mol. Microbiol.">
        <title>The smcL gene of Listeria ivanovii encodes a sphingomyelinase C that mediates bacterial escape from the phagocytic vacuole.</title>
        <authorList>
            <person name="Gonzalez-Zorn B."/>
            <person name="Dominguez-Bernal G."/>
            <person name="Suarez M."/>
            <person name="Ripio M.-T."/>
            <person name="Vega Y."/>
            <person name="Novella S."/>
            <person name="Vazquez-Boland J.-A."/>
        </authorList>
    </citation>
    <scope>NUCLEOTIDE SEQUENCE [GENOMIC DNA]</scope>
    <scope>FUNCTION</scope>
    <scope>DISRUPTION PHENOTYPE</scope>
    <source>
        <strain>ATCC 19119 / DSM 20750 / BCRC 14844 / JCM 7681 / KCTC 3444 / NCTC 11846 / NRRL B-33017 / SLCC 2379 / WDCM 00018</strain>
    </source>
</reference>
<comment type="function">
    <text evidence="2">Virulence factor that promotes intracellular proliferation by mediating the disruption of the phagocytic vacuole and the release of bacteria into the host cell cytosol. May act in concert with the phospholipases PlcA and PlcB and the hemolysin hly to mediate efficient escape from the vacuole.</text>
</comment>
<comment type="catalytic activity">
    <reaction>
        <text>a sphingomyelin + H2O = phosphocholine + an N-acylsphing-4-enine + H(+)</text>
        <dbReference type="Rhea" id="RHEA:19253"/>
        <dbReference type="ChEBI" id="CHEBI:15377"/>
        <dbReference type="ChEBI" id="CHEBI:15378"/>
        <dbReference type="ChEBI" id="CHEBI:17636"/>
        <dbReference type="ChEBI" id="CHEBI:52639"/>
        <dbReference type="ChEBI" id="CHEBI:295975"/>
        <dbReference type="EC" id="3.1.4.12"/>
    </reaction>
</comment>
<comment type="subcellular location">
    <subcellularLocation>
        <location>Secreted</location>
    </subcellularLocation>
</comment>
<comment type="disruption phenotype">
    <text evidence="2">A knockout mutant was shown to be weakly hemolytic on sheep blood agar, does not produce the external halo of incomplete hemolysis characteristic of L.ivanovii and does not give the typical shovel-shaped cooperative hemolytic 'CAMP-like' reaction that happens with Rhodococcus equi. Is also much less virulent for mice infected intravenously.</text>
</comment>
<comment type="miscellaneous">
    <text>Complementation with SmcL of a mutant lacking the membrane-damaging determinants hly, PlcA and PlcB (thus unable to grow intracellularly) was sufficient to promote bacterial intracellular proliferation.</text>
</comment>
<comment type="similarity">
    <text evidence="3">Belongs to the neutral sphingomyelinase family.</text>
</comment>
<proteinExistence type="evidence at protein level"/>
<name>PHLC_LISIV</name>
<sequence length="335" mass="38455">MEKFKIIKTIPKICGAFIFLLFFTFLFGHYGELKTQASDEYPGNFKITSHNVYLFSRNIYPNWGQMHRADLIAQADYMKNNDVVILNEAFDTSASHRLLNNLREMYPHQTPVIGRSKHGWDKTEGNYSNFALEDGGVAVVSQWPIVEKSQHIFQRGGGADRLSNKGFAYVKIMKNGKPYHIIGTHTPADDSLISKDTSRAIRAEQMQEIQTFIAKKNIPKDEIIFIGGDLNVNYGTDEYHDMFKLLNVSSPANFNGQMATWDPTTNSMLKESYPKAAPEYLDYIFVENGHARPHSWHNKVLHTKSPQWSVKSWFKTYTYQDFSDHYPVVGFTDNN</sequence>
<protein>
    <recommendedName>
        <fullName>Sphingomyelinase C</fullName>
        <shortName>SMase</shortName>
        <ecNumber>3.1.4.12</ecNumber>
    </recommendedName>
    <alternativeName>
        <fullName>Sphingomyelin phosphodiesterase</fullName>
    </alternativeName>
</protein>
<organism>
    <name type="scientific">Listeria ivanovii</name>
    <dbReference type="NCBI Taxonomy" id="1638"/>
    <lineage>
        <taxon>Bacteria</taxon>
        <taxon>Bacillati</taxon>
        <taxon>Bacillota</taxon>
        <taxon>Bacilli</taxon>
        <taxon>Bacillales</taxon>
        <taxon>Listeriaceae</taxon>
        <taxon>Listeria</taxon>
    </lineage>
</organism>
<gene>
    <name type="primary">smcL</name>
</gene>